<reference key="1">
    <citation type="journal article" date="2002" name="Nature">
        <title>The genome sequence of Schizosaccharomyces pombe.</title>
        <authorList>
            <person name="Wood V."/>
            <person name="Gwilliam R."/>
            <person name="Rajandream M.A."/>
            <person name="Lyne M.H."/>
            <person name="Lyne R."/>
            <person name="Stewart A."/>
            <person name="Sgouros J.G."/>
            <person name="Peat N."/>
            <person name="Hayles J."/>
            <person name="Baker S.G."/>
            <person name="Basham D."/>
            <person name="Bowman S."/>
            <person name="Brooks K."/>
            <person name="Brown D."/>
            <person name="Brown S."/>
            <person name="Chillingworth T."/>
            <person name="Churcher C.M."/>
            <person name="Collins M."/>
            <person name="Connor R."/>
            <person name="Cronin A."/>
            <person name="Davis P."/>
            <person name="Feltwell T."/>
            <person name="Fraser A."/>
            <person name="Gentles S."/>
            <person name="Goble A."/>
            <person name="Hamlin N."/>
            <person name="Harris D.E."/>
            <person name="Hidalgo J."/>
            <person name="Hodgson G."/>
            <person name="Holroyd S."/>
            <person name="Hornsby T."/>
            <person name="Howarth S."/>
            <person name="Huckle E.J."/>
            <person name="Hunt S."/>
            <person name="Jagels K."/>
            <person name="James K.D."/>
            <person name="Jones L."/>
            <person name="Jones M."/>
            <person name="Leather S."/>
            <person name="McDonald S."/>
            <person name="McLean J."/>
            <person name="Mooney P."/>
            <person name="Moule S."/>
            <person name="Mungall K.L."/>
            <person name="Murphy L.D."/>
            <person name="Niblett D."/>
            <person name="Odell C."/>
            <person name="Oliver K."/>
            <person name="O'Neil S."/>
            <person name="Pearson D."/>
            <person name="Quail M.A."/>
            <person name="Rabbinowitsch E."/>
            <person name="Rutherford K.M."/>
            <person name="Rutter S."/>
            <person name="Saunders D."/>
            <person name="Seeger K."/>
            <person name="Sharp S."/>
            <person name="Skelton J."/>
            <person name="Simmonds M.N."/>
            <person name="Squares R."/>
            <person name="Squares S."/>
            <person name="Stevens K."/>
            <person name="Taylor K."/>
            <person name="Taylor R.G."/>
            <person name="Tivey A."/>
            <person name="Walsh S.V."/>
            <person name="Warren T."/>
            <person name="Whitehead S."/>
            <person name="Woodward J.R."/>
            <person name="Volckaert G."/>
            <person name="Aert R."/>
            <person name="Robben J."/>
            <person name="Grymonprez B."/>
            <person name="Weltjens I."/>
            <person name="Vanstreels E."/>
            <person name="Rieger M."/>
            <person name="Schaefer M."/>
            <person name="Mueller-Auer S."/>
            <person name="Gabel C."/>
            <person name="Fuchs M."/>
            <person name="Duesterhoeft A."/>
            <person name="Fritzc C."/>
            <person name="Holzer E."/>
            <person name="Moestl D."/>
            <person name="Hilbert H."/>
            <person name="Borzym K."/>
            <person name="Langer I."/>
            <person name="Beck A."/>
            <person name="Lehrach H."/>
            <person name="Reinhardt R."/>
            <person name="Pohl T.M."/>
            <person name="Eger P."/>
            <person name="Zimmermann W."/>
            <person name="Wedler H."/>
            <person name="Wambutt R."/>
            <person name="Purnelle B."/>
            <person name="Goffeau A."/>
            <person name="Cadieu E."/>
            <person name="Dreano S."/>
            <person name="Gloux S."/>
            <person name="Lelaure V."/>
            <person name="Mottier S."/>
            <person name="Galibert F."/>
            <person name="Aves S.J."/>
            <person name="Xiang Z."/>
            <person name="Hunt C."/>
            <person name="Moore K."/>
            <person name="Hurst S.M."/>
            <person name="Lucas M."/>
            <person name="Rochet M."/>
            <person name="Gaillardin C."/>
            <person name="Tallada V.A."/>
            <person name="Garzon A."/>
            <person name="Thode G."/>
            <person name="Daga R.R."/>
            <person name="Cruzado L."/>
            <person name="Jimenez J."/>
            <person name="Sanchez M."/>
            <person name="del Rey F."/>
            <person name="Benito J."/>
            <person name="Dominguez A."/>
            <person name="Revuelta J.L."/>
            <person name="Moreno S."/>
            <person name="Armstrong J."/>
            <person name="Forsburg S.L."/>
            <person name="Cerutti L."/>
            <person name="Lowe T."/>
            <person name="McCombie W.R."/>
            <person name="Paulsen I."/>
            <person name="Potashkin J."/>
            <person name="Shpakovski G.V."/>
            <person name="Ussery D."/>
            <person name="Barrell B.G."/>
            <person name="Nurse P."/>
        </authorList>
    </citation>
    <scope>NUCLEOTIDE SEQUENCE [LARGE SCALE GENOMIC DNA]</scope>
    <source>
        <strain>972 / ATCC 24843</strain>
    </source>
</reference>
<reference key="2">
    <citation type="journal article" date="2011" name="Science">
        <title>Comparative functional genomics of the fission yeasts.</title>
        <authorList>
            <person name="Rhind N."/>
            <person name="Chen Z."/>
            <person name="Yassour M."/>
            <person name="Thompson D.A."/>
            <person name="Haas B.J."/>
            <person name="Habib N."/>
            <person name="Wapinski I."/>
            <person name="Roy S."/>
            <person name="Lin M.F."/>
            <person name="Heiman D.I."/>
            <person name="Young S.K."/>
            <person name="Furuya K."/>
            <person name="Guo Y."/>
            <person name="Pidoux A."/>
            <person name="Chen H.M."/>
            <person name="Robbertse B."/>
            <person name="Goldberg J.M."/>
            <person name="Aoki K."/>
            <person name="Bayne E.H."/>
            <person name="Berlin A.M."/>
            <person name="Desjardins C.A."/>
            <person name="Dobbs E."/>
            <person name="Dukaj L."/>
            <person name="Fan L."/>
            <person name="FitzGerald M.G."/>
            <person name="French C."/>
            <person name="Gujja S."/>
            <person name="Hansen K."/>
            <person name="Keifenheim D."/>
            <person name="Levin J.Z."/>
            <person name="Mosher R.A."/>
            <person name="Mueller C.A."/>
            <person name="Pfiffner J."/>
            <person name="Priest M."/>
            <person name="Russ C."/>
            <person name="Smialowska A."/>
            <person name="Swoboda P."/>
            <person name="Sykes S.M."/>
            <person name="Vaughn M."/>
            <person name="Vengrova S."/>
            <person name="Yoder R."/>
            <person name="Zeng Q."/>
            <person name="Allshire R."/>
            <person name="Baulcombe D."/>
            <person name="Birren B.W."/>
            <person name="Brown W."/>
            <person name="Ekwall K."/>
            <person name="Kellis M."/>
            <person name="Leatherwood J."/>
            <person name="Levin H."/>
            <person name="Margalit H."/>
            <person name="Martienssen R."/>
            <person name="Nieduszynski C.A."/>
            <person name="Spatafora J.W."/>
            <person name="Friedman N."/>
            <person name="Dalgaard J.Z."/>
            <person name="Baumann P."/>
            <person name="Niki H."/>
            <person name="Regev A."/>
            <person name="Nusbaum C."/>
        </authorList>
    </citation>
    <scope>REVISION OF GENE MODEL</scope>
</reference>
<reference key="3">
    <citation type="journal article" date="2006" name="Nat. Biotechnol.">
        <title>ORFeome cloning and global analysis of protein localization in the fission yeast Schizosaccharomyces pombe.</title>
        <authorList>
            <person name="Matsuyama A."/>
            <person name="Arai R."/>
            <person name="Yashiroda Y."/>
            <person name="Shirai A."/>
            <person name="Kamata A."/>
            <person name="Sekido S."/>
            <person name="Kobayashi Y."/>
            <person name="Hashimoto A."/>
            <person name="Hamamoto M."/>
            <person name="Hiraoka Y."/>
            <person name="Horinouchi S."/>
            <person name="Yoshida M."/>
        </authorList>
    </citation>
    <scope>SUBCELLULAR LOCATION [LARGE SCALE ANALYSIS]</scope>
</reference>
<proteinExistence type="inferred from homology"/>
<organism>
    <name type="scientific">Schizosaccharomyces pombe (strain 972 / ATCC 24843)</name>
    <name type="common">Fission yeast</name>
    <dbReference type="NCBI Taxonomy" id="284812"/>
    <lineage>
        <taxon>Eukaryota</taxon>
        <taxon>Fungi</taxon>
        <taxon>Dikarya</taxon>
        <taxon>Ascomycota</taxon>
        <taxon>Taphrinomycotina</taxon>
        <taxon>Schizosaccharomycetes</taxon>
        <taxon>Schizosaccharomycetales</taxon>
        <taxon>Schizosaccharomycetaceae</taxon>
        <taxon>Schizosaccharomyces</taxon>
    </lineage>
</organism>
<feature type="chain" id="PRO_0000316236" description="Dolichol kinase sec59">
    <location>
        <begin position="1"/>
        <end position="504"/>
    </location>
</feature>
<feature type="topological domain" description="Cytoplasmic" evidence="2">
    <location>
        <begin position="1"/>
        <end position="55"/>
    </location>
</feature>
<feature type="transmembrane region" description="Helical" evidence="2">
    <location>
        <begin position="56"/>
        <end position="76"/>
    </location>
</feature>
<feature type="topological domain" description="Lumenal" evidence="2">
    <location>
        <position position="77"/>
    </location>
</feature>
<feature type="transmembrane region" description="Helical" evidence="2">
    <location>
        <begin position="78"/>
        <end position="98"/>
    </location>
</feature>
<feature type="topological domain" description="Cytoplasmic" evidence="2">
    <location>
        <begin position="99"/>
        <end position="157"/>
    </location>
</feature>
<feature type="transmembrane region" description="Helical" evidence="2">
    <location>
        <begin position="158"/>
        <end position="178"/>
    </location>
</feature>
<feature type="topological domain" description="Lumenal" evidence="2">
    <location>
        <begin position="179"/>
        <end position="187"/>
    </location>
</feature>
<feature type="transmembrane region" description="Helical" evidence="2">
    <location>
        <begin position="188"/>
        <end position="208"/>
    </location>
</feature>
<feature type="topological domain" description="Cytoplasmic" evidence="2">
    <location>
        <begin position="209"/>
        <end position="215"/>
    </location>
</feature>
<feature type="transmembrane region" description="Helical" evidence="2">
    <location>
        <begin position="216"/>
        <end position="236"/>
    </location>
</feature>
<feature type="topological domain" description="Lumenal" evidence="2">
    <location>
        <begin position="237"/>
        <end position="263"/>
    </location>
</feature>
<feature type="transmembrane region" description="Helical" evidence="2">
    <location>
        <begin position="264"/>
        <end position="284"/>
    </location>
</feature>
<feature type="topological domain" description="Cytoplasmic" evidence="2">
    <location>
        <begin position="285"/>
        <end position="325"/>
    </location>
</feature>
<feature type="transmembrane region" description="Helical" evidence="2">
    <location>
        <begin position="326"/>
        <end position="347"/>
    </location>
</feature>
<feature type="topological domain" description="Lumenal" evidence="2">
    <location>
        <begin position="348"/>
        <end position="373"/>
    </location>
</feature>
<feature type="transmembrane region" description="Helical" evidence="2">
    <location>
        <begin position="374"/>
        <end position="394"/>
    </location>
</feature>
<feature type="topological domain" description="Cytoplasmic" evidence="2">
    <location>
        <begin position="395"/>
        <end position="403"/>
    </location>
</feature>
<feature type="transmembrane region" description="Helical" evidence="2">
    <location>
        <begin position="404"/>
        <end position="424"/>
    </location>
</feature>
<feature type="topological domain" description="Lumenal" evidence="2">
    <location>
        <begin position="425"/>
        <end position="440"/>
    </location>
</feature>
<feature type="transmembrane region" description="Helical" evidence="2">
    <location>
        <begin position="441"/>
        <end position="461"/>
    </location>
</feature>
<feature type="topological domain" description="Cytoplasmic" evidence="2">
    <location>
        <position position="462"/>
    </location>
</feature>
<feature type="transmembrane region" description="Helical" evidence="2">
    <location>
        <begin position="463"/>
        <end position="483"/>
    </location>
</feature>
<feature type="topological domain" description="Lumenal" evidence="2">
    <location>
        <begin position="484"/>
        <end position="504"/>
    </location>
</feature>
<evidence type="ECO:0000250" key="1">
    <source>
        <dbReference type="UniProtKB" id="P20048"/>
    </source>
</evidence>
<evidence type="ECO:0000255" key="2"/>
<evidence type="ECO:0000269" key="3">
    <source>
    </source>
</evidence>
<evidence type="ECO:0000305" key="4"/>
<evidence type="ECO:0000312" key="5">
    <source>
        <dbReference type="PomBase" id="SPCC63.10c"/>
    </source>
</evidence>
<dbReference type="EC" id="2.7.1.108" evidence="1"/>
<dbReference type="EMBL" id="CU329672">
    <property type="protein sequence ID" value="CAB40014.3"/>
    <property type="molecule type" value="Genomic_DNA"/>
</dbReference>
<dbReference type="PIR" id="T41511">
    <property type="entry name" value="T41511"/>
</dbReference>
<dbReference type="RefSeq" id="NP_587983.3">
    <property type="nucleotide sequence ID" value="NM_001022974.3"/>
</dbReference>
<dbReference type="BioGRID" id="275374">
    <property type="interactions" value="3"/>
</dbReference>
<dbReference type="FunCoup" id="Q9Y7T6">
    <property type="interactions" value="52"/>
</dbReference>
<dbReference type="STRING" id="284812.Q9Y7T6"/>
<dbReference type="PaxDb" id="4896-SPCC63.10c.1"/>
<dbReference type="EnsemblFungi" id="SPCC63.10c.1">
    <property type="protein sequence ID" value="SPCC63.10c.1:pep"/>
    <property type="gene ID" value="SPCC63.10c"/>
</dbReference>
<dbReference type="GeneID" id="2538793"/>
<dbReference type="KEGG" id="spo:2538793"/>
<dbReference type="PomBase" id="SPCC63.10c">
    <property type="gene designation" value="sec59"/>
</dbReference>
<dbReference type="VEuPathDB" id="FungiDB:SPCC63.10c"/>
<dbReference type="eggNOG" id="KOG2468">
    <property type="taxonomic scope" value="Eukaryota"/>
</dbReference>
<dbReference type="HOGENOM" id="CLU_540964_0_0_1"/>
<dbReference type="InParanoid" id="Q9Y7T6"/>
<dbReference type="OMA" id="NFRRKTY"/>
<dbReference type="Reactome" id="R-SPO-446199">
    <property type="pathway name" value="Synthesis of Dolichyl-phosphate"/>
</dbReference>
<dbReference type="UniPathway" id="UPA00378"/>
<dbReference type="PRO" id="PR:Q9Y7T6"/>
<dbReference type="Proteomes" id="UP000002485">
    <property type="component" value="Chromosome III"/>
</dbReference>
<dbReference type="GO" id="GO:0005783">
    <property type="term" value="C:endoplasmic reticulum"/>
    <property type="evidence" value="ECO:0007005"/>
    <property type="project" value="PomBase"/>
</dbReference>
<dbReference type="GO" id="GO:0005789">
    <property type="term" value="C:endoplasmic reticulum membrane"/>
    <property type="evidence" value="ECO:0000318"/>
    <property type="project" value="GO_Central"/>
</dbReference>
<dbReference type="GO" id="GO:0004168">
    <property type="term" value="F:dolichol kinase activity"/>
    <property type="evidence" value="ECO:0000318"/>
    <property type="project" value="GO_Central"/>
</dbReference>
<dbReference type="GO" id="GO:0180047">
    <property type="term" value="P:dolichol phosphate mannose biosynthetic process"/>
    <property type="evidence" value="ECO:0000305"/>
    <property type="project" value="PomBase"/>
</dbReference>
<dbReference type="GO" id="GO:0043048">
    <property type="term" value="P:dolichyl monophosphate biosynthetic process"/>
    <property type="evidence" value="ECO:0000318"/>
    <property type="project" value="GO_Central"/>
</dbReference>
<dbReference type="GO" id="GO:0006486">
    <property type="term" value="P:protein glycosylation"/>
    <property type="evidence" value="ECO:0007669"/>
    <property type="project" value="UniProtKB-UniPathway"/>
</dbReference>
<dbReference type="InterPro" id="IPR032974">
    <property type="entry name" value="Polypren_kinase"/>
</dbReference>
<dbReference type="PANTHER" id="PTHR13205:SF15">
    <property type="entry name" value="DOLICHOL KINASE"/>
    <property type="match status" value="1"/>
</dbReference>
<dbReference type="PANTHER" id="PTHR13205">
    <property type="entry name" value="TRANSMEMBRANE PROTEIN 15-RELATED"/>
    <property type="match status" value="1"/>
</dbReference>
<name>DOLK_SCHPO</name>
<gene>
    <name evidence="5" type="primary">sec59</name>
    <name type="ORF">SPCC63.10c</name>
</gene>
<comment type="function">
    <text evidence="1">Catalyzes CTP-mediated phosphorylation of dolichol, the terminal step in de novo dolichyl monophosphate (Dol-P) biosynthesis. Dol-P is a lipid carrier essential for the synthesis of N-linked and O-linked oligosaccharides and for GPI anchors.</text>
</comment>
<comment type="catalytic activity">
    <reaction evidence="1">
        <text>a di-trans,poly-cis-dolichol + CTP = a di-trans,poly-cis-dolichyl phosphate + CDP + H(+)</text>
        <dbReference type="Rhea" id="RHEA:13133"/>
        <dbReference type="Rhea" id="RHEA-COMP:19495"/>
        <dbReference type="Rhea" id="RHEA-COMP:19498"/>
        <dbReference type="ChEBI" id="CHEBI:15378"/>
        <dbReference type="ChEBI" id="CHEBI:16091"/>
        <dbReference type="ChEBI" id="CHEBI:37563"/>
        <dbReference type="ChEBI" id="CHEBI:57683"/>
        <dbReference type="ChEBI" id="CHEBI:58069"/>
        <dbReference type="EC" id="2.7.1.108"/>
    </reaction>
    <physiologicalReaction direction="left-to-right" evidence="1">
        <dbReference type="Rhea" id="RHEA:13134"/>
    </physiologicalReaction>
</comment>
<comment type="pathway">
    <text evidence="1">Protein modification; protein glycosylation.</text>
</comment>
<comment type="subcellular location">
    <subcellularLocation>
        <location evidence="3">Endoplasmic reticulum membrane</location>
        <topology evidence="3">Multi-pass membrane protein</topology>
    </subcellularLocation>
</comment>
<comment type="similarity">
    <text evidence="4">Belongs to the polyprenol kinase family.</text>
</comment>
<protein>
    <recommendedName>
        <fullName>Dolichol kinase sec59</fullName>
        <ecNumber evidence="1">2.7.1.108</ecNumber>
    </recommendedName>
</protein>
<sequence length="504" mass="57425">MYIMSKKCYDTSEKIDREQECVEVNYQHRNFESILEIFSVLFIPFLCNSGKKFLQISNASFFLPACFYLLGSSSIIQLYEPLLWLSSFPFCILYVGFGENSVLYHEMYTVCLYNALLSLTQRWKWLSIVLDGLGNSSVNLKLHETVILAFLEITQNSFTFIEGILICTGLTGLCFATFSYEVSPVVSVLSGVLLISLPTLILLNLCILKLAAKLHLSALFTTCLIYFFSALLVFLVSRSWVAGQLGQAPEVWLFNQIFSHRNSLTRIKIIIWWIICLGCFIFILLRSNRNNPLGKYFTTEDEVLNFRRKTYHALVVFLFLPVCCLDPHFLHLSFSGVLFIFLFVEGIRILRLKPFGKMIHEFLWEYTDNRDHKGPLIISHIYLLIGCAIPIWLSNALKGPVASVELLVGVLCLGCGDSMASIIGKRFGKHRISKTNKSIEGVFAFSISVFLVLHLTQAFHVCPSVTFWKTLFMSLCTAILEGVSTENDNLILPMYMWVLYQALD</sequence>
<accession>Q9Y7T6</accession>
<keyword id="KW-0256">Endoplasmic reticulum</keyword>
<keyword id="KW-0418">Kinase</keyword>
<keyword id="KW-0472">Membrane</keyword>
<keyword id="KW-1185">Reference proteome</keyword>
<keyword id="KW-0808">Transferase</keyword>
<keyword id="KW-0812">Transmembrane</keyword>
<keyword id="KW-1133">Transmembrane helix</keyword>